<evidence type="ECO:0000255" key="1">
    <source>
        <dbReference type="HAMAP-Rule" id="MF_00199"/>
    </source>
</evidence>
<reference key="1">
    <citation type="journal article" date="2005" name="Nucleic Acids Res.">
        <title>Genome dynamics and diversity of Shigella species, the etiologic agents of bacillary dysentery.</title>
        <authorList>
            <person name="Yang F."/>
            <person name="Yang J."/>
            <person name="Zhang X."/>
            <person name="Chen L."/>
            <person name="Jiang Y."/>
            <person name="Yan Y."/>
            <person name="Tang X."/>
            <person name="Wang J."/>
            <person name="Xiong Z."/>
            <person name="Dong J."/>
            <person name="Xue Y."/>
            <person name="Zhu Y."/>
            <person name="Xu X."/>
            <person name="Sun L."/>
            <person name="Chen S."/>
            <person name="Nie H."/>
            <person name="Peng J."/>
            <person name="Xu J."/>
            <person name="Wang Y."/>
            <person name="Yuan Z."/>
            <person name="Wen Y."/>
            <person name="Yao Z."/>
            <person name="Shen Y."/>
            <person name="Qiang B."/>
            <person name="Hou Y."/>
            <person name="Yu J."/>
            <person name="Jin Q."/>
        </authorList>
    </citation>
    <scope>NUCLEOTIDE SEQUENCE [LARGE SCALE GENOMIC DNA]</scope>
    <source>
        <strain>Sb227</strain>
    </source>
</reference>
<gene>
    <name evidence="1" type="primary">apaH</name>
    <name type="ordered locus">SBO_0038</name>
</gene>
<sequence>MATYLIGDVHGCYDELIALLHKVEFTPGKDTLWLTGDLVARGPGSLDVLRYVKSLGDSVRLVLGNHDLHLLAVFAGISRNKPKDRLTPLLEAPDADELLNWLRRQPLLQIDEEKKLVMAHAGITPQWDLQTAKECARDVEAVLSSDSYPFFLDAMYGDMPNNWSPELRGLGRLRFITNAFTRMRFCFPNGQLDMYSKESPEEAPAPLKPWFAIPGPVAEEYSIAFGHWASLEGKGTPEGIYALDTGCCWGGTLTCLRWEDKQYFVQPSNRHKDLGEAAAS</sequence>
<dbReference type="EC" id="3.6.1.41" evidence="1"/>
<dbReference type="EMBL" id="CP000036">
    <property type="protein sequence ID" value="ABB64774.1"/>
    <property type="molecule type" value="Genomic_DNA"/>
</dbReference>
<dbReference type="RefSeq" id="WP_000257192.1">
    <property type="nucleotide sequence ID" value="NC_007613.1"/>
</dbReference>
<dbReference type="SMR" id="Q326I4"/>
<dbReference type="GeneID" id="93777386"/>
<dbReference type="KEGG" id="sbo:SBO_0038"/>
<dbReference type="HOGENOM" id="CLU_056184_2_0_6"/>
<dbReference type="Proteomes" id="UP000007067">
    <property type="component" value="Chromosome"/>
</dbReference>
<dbReference type="GO" id="GO:0008803">
    <property type="term" value="F:bis(5'-nucleosyl)-tetraphosphatase (symmetrical) activity"/>
    <property type="evidence" value="ECO:0007669"/>
    <property type="project" value="UniProtKB-UniRule"/>
</dbReference>
<dbReference type="CDD" id="cd07422">
    <property type="entry name" value="MPP_ApaH"/>
    <property type="match status" value="1"/>
</dbReference>
<dbReference type="FunFam" id="3.60.21.10:FF:000013">
    <property type="entry name" value="Bis(5'-nucleosyl)-tetraphosphatase, symmetrical"/>
    <property type="match status" value="1"/>
</dbReference>
<dbReference type="Gene3D" id="3.60.21.10">
    <property type="match status" value="1"/>
</dbReference>
<dbReference type="HAMAP" id="MF_00199">
    <property type="entry name" value="ApaH"/>
    <property type="match status" value="1"/>
</dbReference>
<dbReference type="InterPro" id="IPR004617">
    <property type="entry name" value="ApaH"/>
</dbReference>
<dbReference type="InterPro" id="IPR004843">
    <property type="entry name" value="Calcineurin-like_PHP_ApaH"/>
</dbReference>
<dbReference type="InterPro" id="IPR029052">
    <property type="entry name" value="Metallo-depent_PP-like"/>
</dbReference>
<dbReference type="NCBIfam" id="TIGR00668">
    <property type="entry name" value="apaH"/>
    <property type="match status" value="1"/>
</dbReference>
<dbReference type="NCBIfam" id="NF001204">
    <property type="entry name" value="PRK00166.1"/>
    <property type="match status" value="1"/>
</dbReference>
<dbReference type="PANTHER" id="PTHR40942">
    <property type="match status" value="1"/>
</dbReference>
<dbReference type="PANTHER" id="PTHR40942:SF4">
    <property type="entry name" value="CYTOCHROME C5"/>
    <property type="match status" value="1"/>
</dbReference>
<dbReference type="Pfam" id="PF00149">
    <property type="entry name" value="Metallophos"/>
    <property type="match status" value="1"/>
</dbReference>
<dbReference type="PIRSF" id="PIRSF000903">
    <property type="entry name" value="B5n-ttraPtase_sm"/>
    <property type="match status" value="1"/>
</dbReference>
<dbReference type="SUPFAM" id="SSF56300">
    <property type="entry name" value="Metallo-dependent phosphatases"/>
    <property type="match status" value="1"/>
</dbReference>
<proteinExistence type="inferred from homology"/>
<protein>
    <recommendedName>
        <fullName evidence="1">Bis(5'-nucleosyl)-tetraphosphatase, symmetrical</fullName>
        <ecNumber evidence="1">3.6.1.41</ecNumber>
    </recommendedName>
    <alternativeName>
        <fullName evidence="1">Ap4A hydrolase</fullName>
    </alternativeName>
    <alternativeName>
        <fullName evidence="1">Diadenosine 5',5'''-P1,P4-tetraphosphate pyrophosphohydrolase</fullName>
    </alternativeName>
    <alternativeName>
        <fullName evidence="1">Diadenosine tetraphosphatase</fullName>
    </alternativeName>
</protein>
<feature type="chain" id="PRO_1000012097" description="Bis(5'-nucleosyl)-tetraphosphatase, symmetrical">
    <location>
        <begin position="1"/>
        <end position="280"/>
    </location>
</feature>
<organism>
    <name type="scientific">Shigella boydii serotype 4 (strain Sb227)</name>
    <dbReference type="NCBI Taxonomy" id="300268"/>
    <lineage>
        <taxon>Bacteria</taxon>
        <taxon>Pseudomonadati</taxon>
        <taxon>Pseudomonadota</taxon>
        <taxon>Gammaproteobacteria</taxon>
        <taxon>Enterobacterales</taxon>
        <taxon>Enterobacteriaceae</taxon>
        <taxon>Shigella</taxon>
    </lineage>
</organism>
<keyword id="KW-0378">Hydrolase</keyword>
<comment type="function">
    <text evidence="1">Hydrolyzes diadenosine 5',5'''-P1,P4-tetraphosphate to yield ADP.</text>
</comment>
<comment type="catalytic activity">
    <reaction evidence="1">
        <text>P(1),P(4)-bis(5'-adenosyl) tetraphosphate + H2O = 2 ADP + 2 H(+)</text>
        <dbReference type="Rhea" id="RHEA:24252"/>
        <dbReference type="ChEBI" id="CHEBI:15377"/>
        <dbReference type="ChEBI" id="CHEBI:15378"/>
        <dbReference type="ChEBI" id="CHEBI:58141"/>
        <dbReference type="ChEBI" id="CHEBI:456216"/>
        <dbReference type="EC" id="3.6.1.41"/>
    </reaction>
</comment>
<comment type="similarity">
    <text evidence="1">Belongs to the Ap4A hydrolase family.</text>
</comment>
<name>APAH_SHIBS</name>
<accession>Q326I4</accession>